<evidence type="ECO:0000255" key="1"/>
<evidence type="ECO:0000256" key="2">
    <source>
        <dbReference type="SAM" id="MobiDB-lite"/>
    </source>
</evidence>
<evidence type="ECO:0000269" key="3">
    <source>
    </source>
</evidence>
<evidence type="ECO:0000269" key="4">
    <source>
    </source>
</evidence>
<evidence type="ECO:0000303" key="5">
    <source>
    </source>
</evidence>
<evidence type="ECO:0000303" key="6">
    <source>
    </source>
</evidence>
<evidence type="ECO:0000305" key="7"/>
<name>FGF17_HUMAN</name>
<feature type="signal peptide" evidence="1">
    <location>
        <begin position="1"/>
        <end position="22"/>
    </location>
</feature>
<feature type="chain" id="PRO_0000008985" description="Fibroblast growth factor 17">
    <location>
        <begin position="23"/>
        <end position="216"/>
    </location>
</feature>
<feature type="region of interest" description="Disordered" evidence="2">
    <location>
        <begin position="190"/>
        <end position="216"/>
    </location>
</feature>
<feature type="compositionally biased region" description="Basic residues" evidence="2">
    <location>
        <begin position="204"/>
        <end position="216"/>
    </location>
</feature>
<feature type="glycosylation site" description="N-linked (GlcNAc...) asparagine" evidence="1">
    <location>
        <position position="137"/>
    </location>
</feature>
<feature type="splice variant" id="VSP_008715" description="In isoform 2." evidence="5 6">
    <location>
        <begin position="25"/>
        <end position="35"/>
    </location>
</feature>
<feature type="sequence variant" id="VAR_069947" description="In HH20; some patients have a second mutation in another HH-associated gene including FGFR1, HS6ST1 and FLRT3; the mutant has reduced ability to activate FGFR1; dbSNP:rs398123024." evidence="4">
    <original>I</original>
    <variation>T</variation>
    <location>
        <position position="108"/>
    </location>
</feature>
<feature type="sequence variant" id="VAR_069948" description="In HH20; the mutant has reduced ability to activate FGFR1; dbSNP:rs398123025." evidence="4">
    <original>R</original>
    <variation>H</variation>
    <location>
        <position position="177"/>
    </location>
</feature>
<feature type="sequence variant" id="VAR_069949" description="In HH20; dbSNP:rs398123026." evidence="4">
    <original>N</original>
    <variation>S</variation>
    <location>
        <position position="187"/>
    </location>
</feature>
<reference key="1">
    <citation type="journal article" date="1998" name="Biochem. Biophys. Res. Commun.">
        <title>Structure and expression of a novel fibroblast growth factor, FGF-17, preferentially expressed in the embryonic brain.</title>
        <authorList>
            <person name="Hoshikawa M."/>
            <person name="Ohbayashi N."/>
            <person name="Yonamine A."/>
            <person name="Konishi M."/>
            <person name="Ozaki K."/>
            <person name="Fukui S."/>
            <person name="Itoh N."/>
        </authorList>
    </citation>
    <scope>NUCLEOTIDE SEQUENCE [MRNA] (ISOFORM 1)</scope>
    <source>
        <tissue>Fetal brain</tissue>
    </source>
</reference>
<reference key="2">
    <citation type="journal article" date="2003" name="Genome Res.">
        <title>The secreted protein discovery initiative (SPDI), a large-scale effort to identify novel human secreted and transmembrane proteins: a bioinformatics assessment.</title>
        <authorList>
            <person name="Clark H.F."/>
            <person name="Gurney A.L."/>
            <person name="Abaya E."/>
            <person name="Baker K."/>
            <person name="Baldwin D.T."/>
            <person name="Brush J."/>
            <person name="Chen J."/>
            <person name="Chow B."/>
            <person name="Chui C."/>
            <person name="Crowley C."/>
            <person name="Currell B."/>
            <person name="Deuel B."/>
            <person name="Dowd P."/>
            <person name="Eaton D."/>
            <person name="Foster J.S."/>
            <person name="Grimaldi C."/>
            <person name="Gu Q."/>
            <person name="Hass P.E."/>
            <person name="Heldens S."/>
            <person name="Huang A."/>
            <person name="Kim H.S."/>
            <person name="Klimowski L."/>
            <person name="Jin Y."/>
            <person name="Johnson S."/>
            <person name="Lee J."/>
            <person name="Lewis L."/>
            <person name="Liao D."/>
            <person name="Mark M.R."/>
            <person name="Robbie E."/>
            <person name="Sanchez C."/>
            <person name="Schoenfeld J."/>
            <person name="Seshagiri S."/>
            <person name="Simmons L."/>
            <person name="Singh J."/>
            <person name="Smith V."/>
            <person name="Stinson J."/>
            <person name="Vagts A."/>
            <person name="Vandlen R.L."/>
            <person name="Watanabe C."/>
            <person name="Wieand D."/>
            <person name="Woods K."/>
            <person name="Xie M.-H."/>
            <person name="Yansura D.G."/>
            <person name="Yi S."/>
            <person name="Yu G."/>
            <person name="Yuan J."/>
            <person name="Zhang M."/>
            <person name="Zhang Z."/>
            <person name="Goddard A.D."/>
            <person name="Wood W.I."/>
            <person name="Godowski P.J."/>
            <person name="Gray A.M."/>
        </authorList>
    </citation>
    <scope>NUCLEOTIDE SEQUENCE [LARGE SCALE MRNA] (ISOFORM 2)</scope>
</reference>
<reference key="3">
    <citation type="submission" date="2002-03" db="EMBL/GenBank/DDBJ databases">
        <authorList>
            <consortium name="NIEHS SNPs program"/>
        </authorList>
    </citation>
    <scope>NUCLEOTIDE SEQUENCE [GENOMIC DNA]</scope>
</reference>
<reference key="4">
    <citation type="submission" date="2005-09" db="EMBL/GenBank/DDBJ databases">
        <authorList>
            <person name="Mural R.J."/>
            <person name="Istrail S."/>
            <person name="Sutton G.G."/>
            <person name="Florea L."/>
            <person name="Halpern A.L."/>
            <person name="Mobarry C.M."/>
            <person name="Lippert R."/>
            <person name="Walenz B."/>
            <person name="Shatkay H."/>
            <person name="Dew I."/>
            <person name="Miller J.R."/>
            <person name="Flanigan M.J."/>
            <person name="Edwards N.J."/>
            <person name="Bolanos R."/>
            <person name="Fasulo D."/>
            <person name="Halldorsson B.V."/>
            <person name="Hannenhalli S."/>
            <person name="Turner R."/>
            <person name="Yooseph S."/>
            <person name="Lu F."/>
            <person name="Nusskern D.R."/>
            <person name="Shue B.C."/>
            <person name="Zheng X.H."/>
            <person name="Zhong F."/>
            <person name="Delcher A.L."/>
            <person name="Huson D.H."/>
            <person name="Kravitz S.A."/>
            <person name="Mouchard L."/>
            <person name="Reinert K."/>
            <person name="Remington K.A."/>
            <person name="Clark A.G."/>
            <person name="Waterman M.S."/>
            <person name="Eichler E.E."/>
            <person name="Adams M.D."/>
            <person name="Hunkapiller M.W."/>
            <person name="Myers E.W."/>
            <person name="Venter J.C."/>
        </authorList>
    </citation>
    <scope>NUCLEOTIDE SEQUENCE [LARGE SCALE GENOMIC DNA]</scope>
</reference>
<reference key="5">
    <citation type="journal article" date="2004" name="Genome Res.">
        <title>The status, quality, and expansion of the NIH full-length cDNA project: the Mammalian Gene Collection (MGC).</title>
        <authorList>
            <consortium name="The MGC Project Team"/>
        </authorList>
    </citation>
    <scope>NUCLEOTIDE SEQUENCE [LARGE SCALE MRNA] (ISOFORMS 1 AND 2)</scope>
</reference>
<reference key="6">
    <citation type="journal article" date="2006" name="J. Biol. Chem.">
        <title>Receptor specificity of the fibroblast growth factor family. The complete mammalian FGF family.</title>
        <authorList>
            <person name="Zhang X."/>
            <person name="Ibrahimi O.A."/>
            <person name="Olsen S.K."/>
            <person name="Umemori H."/>
            <person name="Mohammadi M."/>
            <person name="Ornitz D.M."/>
        </authorList>
    </citation>
    <scope>INTERACTION WITH FGFR3 AND FGFR4</scope>
    <scope>FUNCTION IN STIMULATION OF CELL PROLIFERATION</scope>
</reference>
<reference key="7">
    <citation type="journal article" date="2010" name="Nat. Rev. Cancer">
        <title>Fibroblast growth factor signalling: from development to cancer.</title>
        <authorList>
            <person name="Turner N."/>
            <person name="Grose R."/>
        </authorList>
    </citation>
    <scope>REVIEW</scope>
</reference>
<reference key="8">
    <citation type="journal article" date="2013" name="Am. J. Hum. Genet.">
        <title>Mutations in FGF17, IL17RD, DUSP6, SPRY4, and FLRT3 are identified in individuals with congenital hypogonadotropic hypogonadism.</title>
        <authorList>
            <person name="Miraoui H."/>
            <person name="Dwyer A.A."/>
            <person name="Sykiotis G.P."/>
            <person name="Plummer L."/>
            <person name="Chung W."/>
            <person name="Feng B."/>
            <person name="Beenken A."/>
            <person name="Clarke J."/>
            <person name="Pers T.H."/>
            <person name="Dworzynski P."/>
            <person name="Keefe K."/>
            <person name="Niedziela M."/>
            <person name="Raivio T."/>
            <person name="Crowley W.F. Jr."/>
            <person name="Seminara S.B."/>
            <person name="Quinton R."/>
            <person name="Hughes V.A."/>
            <person name="Kumanov P."/>
            <person name="Young J."/>
            <person name="Yialamas M.A."/>
            <person name="Hall J.E."/>
            <person name="Van Vliet G."/>
            <person name="Chanoine J.P."/>
            <person name="Rubenstein J."/>
            <person name="Mohammadi M."/>
            <person name="Tsai P.S."/>
            <person name="Sidis Y."/>
            <person name="Lage K."/>
            <person name="Pitteloud N."/>
        </authorList>
    </citation>
    <scope>VARIANTS HH20 THR-108; HIS-177 AND SER-187</scope>
    <scope>CHARACTERIZATION OF VARIANTS HH20 THR-108 AND HIS-177</scope>
</reference>
<gene>
    <name type="primary">FGF17</name>
    <name type="ORF">UNQ161/PRO187</name>
</gene>
<organism>
    <name type="scientific">Homo sapiens</name>
    <name type="common">Human</name>
    <dbReference type="NCBI Taxonomy" id="9606"/>
    <lineage>
        <taxon>Eukaryota</taxon>
        <taxon>Metazoa</taxon>
        <taxon>Chordata</taxon>
        <taxon>Craniata</taxon>
        <taxon>Vertebrata</taxon>
        <taxon>Euteleostomi</taxon>
        <taxon>Mammalia</taxon>
        <taxon>Eutheria</taxon>
        <taxon>Euarchontoglires</taxon>
        <taxon>Primates</taxon>
        <taxon>Haplorrhini</taxon>
        <taxon>Catarrhini</taxon>
        <taxon>Hominidae</taxon>
        <taxon>Homo</taxon>
    </lineage>
</organism>
<accession>O60258</accession>
<accession>B7ZLG4</accession>
<accession>Q2M2W1</accession>
<keyword id="KW-0025">Alternative splicing</keyword>
<keyword id="KW-0217">Developmental protein</keyword>
<keyword id="KW-0225">Disease variant</keyword>
<keyword id="KW-0325">Glycoprotein</keyword>
<keyword id="KW-0339">Growth factor</keyword>
<keyword id="KW-1016">Hypogonadotropic hypogonadism</keyword>
<keyword id="KW-0956">Kallmann syndrome</keyword>
<keyword id="KW-1267">Proteomics identification</keyword>
<keyword id="KW-1185">Reference proteome</keyword>
<keyword id="KW-0964">Secreted</keyword>
<keyword id="KW-0732">Signal</keyword>
<proteinExistence type="evidence at protein level"/>
<sequence>MGAARLLPNLTLCLQLLILCCQTQGENHPSPNFNQYVRDQGAMTDQLSRRQIREYQLYSRTSGKHVQVTGRRISATAEDGNKFAKLIVETDTFGSRVRIKGAESEKYICMNKRGKLIGKPSGKSKDCVFTEIVLENNYTAFQNARHEGWFMAFTRQGRPRQASRSRQNQREAHFIKRLYQGQLPFPNHAEKQKQFEFVGSAPTRRTKRTRRPQPLT</sequence>
<protein>
    <recommendedName>
        <fullName>Fibroblast growth factor 17</fullName>
        <shortName>FGF-17</shortName>
    </recommendedName>
</protein>
<comment type="function">
    <text evidence="3">Plays an important role in the regulation of embryonic development and as signaling molecule in the induction and patterning of the embryonic brain. Required for normal brain development.</text>
</comment>
<comment type="subunit">
    <text evidence="3">Interacts with FGFR3 and FGFR4.</text>
</comment>
<comment type="interaction">
    <interactant intactId="EBI-12184083">
        <id>O60258</id>
    </interactant>
    <interactant intactId="EBI-947187">
        <id>Q9UHD9</id>
        <label>UBQLN2</label>
    </interactant>
    <organismsDiffer>false</organismsDiffer>
    <experiments>3</experiments>
</comment>
<comment type="subcellular location">
    <subcellularLocation>
        <location>Secreted</location>
    </subcellularLocation>
</comment>
<comment type="alternative products">
    <event type="alternative splicing"/>
    <isoform>
        <id>O60258-1</id>
        <name>1</name>
        <sequence type="displayed"/>
    </isoform>
    <isoform>
        <id>O60258-2</id>
        <name>2</name>
        <sequence type="described" ref="VSP_008715"/>
    </isoform>
</comment>
<comment type="tissue specificity">
    <text>Preferentially expressed in the embryonic brain.</text>
</comment>
<comment type="developmental stage">
    <text>Detected in embryos at 14.5 dpc, but not at 10.5 dpc and 19.5 dpc. Preferentially expressed in the neuroepithelia of the isthmus and septum of the embryonic brain at 14.5 dpc.</text>
</comment>
<comment type="disease" evidence="4">
    <disease id="DI-03771">
        <name>Hypogonadotropic hypogonadism 20 with or without anosmia</name>
        <acronym>HH20</acronym>
        <description>A disorder characterized by absent or incomplete sexual maturation by the age of 18 years, in conjunction with low levels of circulating gonadotropins and testosterone and no other abnormalities of the hypothalamic-pituitary axis. In some cases, it is associated with non-reproductive phenotypes, such as anosmia, cleft palate, and sensorineural hearing loss. Anosmia or hyposmia is related to the absence or hypoplasia of the olfactory bulbs and tracts. Hypogonadism is due to deficiency in gonadotropin-releasing hormone and probably results from a failure of embryonic migration of gonadotropin-releasing hormone-synthesizing neurons. In the presence of anosmia, idiopathic hypogonadotropic hypogonadism is referred to as Kallmann syndrome, whereas in the presence of a normal sense of smell, it has been termed normosmic idiopathic hypogonadotropic hypogonadism (nIHH).</description>
        <dbReference type="MIM" id="615270"/>
    </disease>
    <text evidence="4">The disease is caused by variants affecting distinct genetic loci, including the gene represented in this entry. Some patients carrying mutations in FGF17 also have a mutation in another HH-associated gene including FGFR1, HS6ST1 and FLRT3 (PubMed:23643382).</text>
</comment>
<comment type="similarity">
    <text evidence="7">Belongs to the heparin-binding growth factors family.</text>
</comment>
<dbReference type="EMBL" id="AB009249">
    <property type="protein sequence ID" value="BAA25429.1"/>
    <property type="molecule type" value="mRNA"/>
</dbReference>
<dbReference type="EMBL" id="AY358869">
    <property type="protein sequence ID" value="AAQ89228.1"/>
    <property type="molecule type" value="mRNA"/>
</dbReference>
<dbReference type="EMBL" id="AF497475">
    <property type="protein sequence ID" value="AAM09570.1"/>
    <property type="molecule type" value="Genomic_DNA"/>
</dbReference>
<dbReference type="EMBL" id="CH471080">
    <property type="protein sequence ID" value="EAW63729.1"/>
    <property type="molecule type" value="Genomic_DNA"/>
</dbReference>
<dbReference type="EMBL" id="BC069475">
    <property type="protein sequence ID" value="AAH69475.1"/>
    <property type="molecule type" value="mRNA"/>
</dbReference>
<dbReference type="EMBL" id="BC105131">
    <property type="protein sequence ID" value="AAI05132.1"/>
    <property type="molecule type" value="mRNA"/>
</dbReference>
<dbReference type="EMBL" id="BC113489">
    <property type="protein sequence ID" value="AAI13490.1"/>
    <property type="molecule type" value="mRNA"/>
</dbReference>
<dbReference type="EMBL" id="BC143789">
    <property type="protein sequence ID" value="AAI43790.1"/>
    <property type="molecule type" value="mRNA"/>
</dbReference>
<dbReference type="CCDS" id="CCDS6019.1">
    <molecule id="O60258-1"/>
</dbReference>
<dbReference type="CCDS" id="CCDS78310.1">
    <molecule id="O60258-2"/>
</dbReference>
<dbReference type="RefSeq" id="NP_001291407.1">
    <molecule id="O60258-2"/>
    <property type="nucleotide sequence ID" value="NM_001304478.1"/>
</dbReference>
<dbReference type="RefSeq" id="NP_003858.1">
    <molecule id="O60258-1"/>
    <property type="nucleotide sequence ID" value="NM_003867.4"/>
</dbReference>
<dbReference type="SMR" id="O60258"/>
<dbReference type="BioGRID" id="114349">
    <property type="interactions" value="42"/>
</dbReference>
<dbReference type="FunCoup" id="O60258">
    <property type="interactions" value="893"/>
</dbReference>
<dbReference type="IntAct" id="O60258">
    <property type="interactions" value="33"/>
</dbReference>
<dbReference type="STRING" id="9606.ENSP00000352414"/>
<dbReference type="GlyCosmos" id="O60258">
    <property type="glycosylation" value="1 site, No reported glycans"/>
</dbReference>
<dbReference type="GlyGen" id="O60258">
    <property type="glycosylation" value="2 sites, 1 O-linked glycan (1 site)"/>
</dbReference>
<dbReference type="iPTMnet" id="O60258"/>
<dbReference type="PhosphoSitePlus" id="O60258"/>
<dbReference type="BioMuta" id="FGF17"/>
<dbReference type="MassIVE" id="O60258"/>
<dbReference type="PaxDb" id="9606-ENSP00000352414"/>
<dbReference type="PeptideAtlas" id="O60258"/>
<dbReference type="ProteomicsDB" id="49284">
    <molecule id="O60258-1"/>
</dbReference>
<dbReference type="ProteomicsDB" id="49285">
    <molecule id="O60258-2"/>
</dbReference>
<dbReference type="Antibodypedia" id="22456">
    <property type="antibodies" value="326 antibodies from 29 providers"/>
</dbReference>
<dbReference type="DNASU" id="8822"/>
<dbReference type="Ensembl" id="ENST00000359441.4">
    <molecule id="O60258-1"/>
    <property type="protein sequence ID" value="ENSP00000352414.3"/>
    <property type="gene ID" value="ENSG00000158815.11"/>
</dbReference>
<dbReference type="Ensembl" id="ENST00000518533.5">
    <molecule id="O60258-2"/>
    <property type="protein sequence ID" value="ENSP00000431041.1"/>
    <property type="gene ID" value="ENSG00000158815.11"/>
</dbReference>
<dbReference type="GeneID" id="8822"/>
<dbReference type="KEGG" id="hsa:8822"/>
<dbReference type="MANE-Select" id="ENST00000359441.4">
    <property type="protein sequence ID" value="ENSP00000352414.3"/>
    <property type="RefSeq nucleotide sequence ID" value="NM_003867.4"/>
    <property type="RefSeq protein sequence ID" value="NP_003858.1"/>
</dbReference>
<dbReference type="UCSC" id="uc003xag.4">
    <molecule id="O60258-1"/>
    <property type="organism name" value="human"/>
</dbReference>
<dbReference type="AGR" id="HGNC:3673"/>
<dbReference type="CTD" id="8822"/>
<dbReference type="DisGeNET" id="8822"/>
<dbReference type="GeneCards" id="FGF17"/>
<dbReference type="GeneReviews" id="FGF17"/>
<dbReference type="HGNC" id="HGNC:3673">
    <property type="gene designation" value="FGF17"/>
</dbReference>
<dbReference type="HPA" id="ENSG00000158815">
    <property type="expression patterns" value="Tissue enriched (brain)"/>
</dbReference>
<dbReference type="MalaCards" id="FGF17"/>
<dbReference type="MIM" id="603725">
    <property type="type" value="gene"/>
</dbReference>
<dbReference type="MIM" id="615270">
    <property type="type" value="phenotype"/>
</dbReference>
<dbReference type="neXtProt" id="NX_O60258"/>
<dbReference type="OpenTargets" id="ENSG00000158815"/>
<dbReference type="Orphanet" id="478">
    <property type="disease" value="Kallmann syndrome"/>
</dbReference>
<dbReference type="Orphanet" id="432">
    <property type="disease" value="Normosmic congenital hypogonadotropic hypogonadism"/>
</dbReference>
<dbReference type="PharmGKB" id="PA28112"/>
<dbReference type="VEuPathDB" id="HostDB:ENSG00000158815"/>
<dbReference type="eggNOG" id="KOG3885">
    <property type="taxonomic scope" value="Eukaryota"/>
</dbReference>
<dbReference type="GeneTree" id="ENSGT00940000161965"/>
<dbReference type="HOGENOM" id="CLU_090682_0_0_1"/>
<dbReference type="InParanoid" id="O60258"/>
<dbReference type="OMA" id="LCCQTQV"/>
<dbReference type="OrthoDB" id="5988014at2759"/>
<dbReference type="PAN-GO" id="O60258">
    <property type="GO annotations" value="12 GO annotations based on evolutionary models"/>
</dbReference>
<dbReference type="PhylomeDB" id="O60258"/>
<dbReference type="TreeFam" id="TF331233"/>
<dbReference type="PathwayCommons" id="O60258"/>
<dbReference type="Reactome" id="R-HSA-109704">
    <molecule id="O60258-1"/>
    <property type="pathway name" value="PI3K Cascade"/>
</dbReference>
<dbReference type="Reactome" id="R-HSA-1257604">
    <molecule id="O60258-1"/>
    <property type="pathway name" value="PIP3 activates AKT signaling"/>
</dbReference>
<dbReference type="Reactome" id="R-HSA-1839122">
    <molecule id="O60258-1"/>
    <property type="pathway name" value="Signaling by activated point mutants of FGFR1"/>
</dbReference>
<dbReference type="Reactome" id="R-HSA-1839130">
    <molecule id="O60258-1"/>
    <property type="pathway name" value="Signaling by activated point mutants of FGFR3"/>
</dbReference>
<dbReference type="Reactome" id="R-HSA-190322">
    <molecule id="O60258-1"/>
    <property type="pathway name" value="FGFR4 ligand binding and activation"/>
</dbReference>
<dbReference type="Reactome" id="R-HSA-190371">
    <molecule id="O60258-1"/>
    <property type="pathway name" value="FGFR3b ligand binding and activation"/>
</dbReference>
<dbReference type="Reactome" id="R-HSA-190372">
    <molecule id="O60258-1"/>
    <property type="pathway name" value="FGFR3c ligand binding and activation"/>
</dbReference>
<dbReference type="Reactome" id="R-HSA-190373">
    <molecule id="O60258-1"/>
    <property type="pathway name" value="FGFR1c ligand binding and activation"/>
</dbReference>
<dbReference type="Reactome" id="R-HSA-190375">
    <molecule id="O60258-1"/>
    <property type="pathway name" value="FGFR2c ligand binding and activation"/>
</dbReference>
<dbReference type="Reactome" id="R-HSA-2033519">
    <molecule id="O60258-1"/>
    <property type="pathway name" value="Activated point mutants of FGFR2"/>
</dbReference>
<dbReference type="Reactome" id="R-HSA-2219530">
    <molecule id="O60258-1"/>
    <property type="pathway name" value="Constitutive Signaling by Aberrant PI3K in Cancer"/>
</dbReference>
<dbReference type="Reactome" id="R-HSA-5654219">
    <molecule id="O60258-1"/>
    <property type="pathway name" value="Phospholipase C-mediated cascade: FGFR1"/>
</dbReference>
<dbReference type="Reactome" id="R-HSA-5654221">
    <molecule id="O60258-1"/>
    <property type="pathway name" value="Phospholipase C-mediated cascade, FGFR2"/>
</dbReference>
<dbReference type="Reactome" id="R-HSA-5654227">
    <molecule id="O60258-1"/>
    <property type="pathway name" value="Phospholipase C-mediated cascade, FGFR3"/>
</dbReference>
<dbReference type="Reactome" id="R-HSA-5654228">
    <molecule id="O60258-1"/>
    <property type="pathway name" value="Phospholipase C-mediated cascade, FGFR4"/>
</dbReference>
<dbReference type="Reactome" id="R-HSA-5654687">
    <molecule id="O60258-1"/>
    <property type="pathway name" value="Downstream signaling of activated FGFR1"/>
</dbReference>
<dbReference type="Reactome" id="R-HSA-5654688">
    <molecule id="O60258-1"/>
    <property type="pathway name" value="SHC-mediated cascade:FGFR1"/>
</dbReference>
<dbReference type="Reactome" id="R-HSA-5654689">
    <molecule id="O60258-1"/>
    <property type="pathway name" value="PI-3K cascade:FGFR1"/>
</dbReference>
<dbReference type="Reactome" id="R-HSA-5654693">
    <molecule id="O60258-1"/>
    <property type="pathway name" value="FRS-mediated FGFR1 signaling"/>
</dbReference>
<dbReference type="Reactome" id="R-HSA-5654695">
    <molecule id="O60258-1"/>
    <property type="pathway name" value="PI-3K cascade:FGFR2"/>
</dbReference>
<dbReference type="Reactome" id="R-HSA-5654699">
    <molecule id="O60258-1"/>
    <property type="pathway name" value="SHC-mediated cascade:FGFR2"/>
</dbReference>
<dbReference type="Reactome" id="R-HSA-5654700">
    <molecule id="O60258-1"/>
    <property type="pathway name" value="FRS-mediated FGFR2 signaling"/>
</dbReference>
<dbReference type="Reactome" id="R-HSA-5654704">
    <molecule id="O60258-1"/>
    <property type="pathway name" value="SHC-mediated cascade:FGFR3"/>
</dbReference>
<dbReference type="Reactome" id="R-HSA-5654706">
    <molecule id="O60258-1"/>
    <property type="pathway name" value="FRS-mediated FGFR3 signaling"/>
</dbReference>
<dbReference type="Reactome" id="R-HSA-5654710">
    <molecule id="O60258-1"/>
    <property type="pathway name" value="PI-3K cascade:FGFR3"/>
</dbReference>
<dbReference type="Reactome" id="R-HSA-5654712">
    <molecule id="O60258-1"/>
    <property type="pathway name" value="FRS-mediated FGFR4 signaling"/>
</dbReference>
<dbReference type="Reactome" id="R-HSA-5654719">
    <molecule id="O60258-1"/>
    <property type="pathway name" value="SHC-mediated cascade:FGFR4"/>
</dbReference>
<dbReference type="Reactome" id="R-HSA-5654720">
    <molecule id="O60258-1"/>
    <property type="pathway name" value="PI-3K cascade:FGFR4"/>
</dbReference>
<dbReference type="Reactome" id="R-HSA-5654726">
    <molecule id="O60258-1"/>
    <property type="pathway name" value="Negative regulation of FGFR1 signaling"/>
</dbReference>
<dbReference type="Reactome" id="R-HSA-5654727">
    <molecule id="O60258-1"/>
    <property type="pathway name" value="Negative regulation of FGFR2 signaling"/>
</dbReference>
<dbReference type="Reactome" id="R-HSA-5654732">
    <molecule id="O60258-1"/>
    <property type="pathway name" value="Negative regulation of FGFR3 signaling"/>
</dbReference>
<dbReference type="Reactome" id="R-HSA-5654733">
    <molecule id="O60258-1"/>
    <property type="pathway name" value="Negative regulation of FGFR4 signaling"/>
</dbReference>
<dbReference type="Reactome" id="R-HSA-5655253">
    <molecule id="O60258-1"/>
    <property type="pathway name" value="Signaling by FGFR2 in disease"/>
</dbReference>
<dbReference type="Reactome" id="R-HSA-5655302">
    <molecule id="O60258-1"/>
    <property type="pathway name" value="Signaling by FGFR1 in disease"/>
</dbReference>
<dbReference type="Reactome" id="R-HSA-5655332">
    <molecule id="O60258-1"/>
    <property type="pathway name" value="Signaling by FGFR3 in disease"/>
</dbReference>
<dbReference type="Reactome" id="R-HSA-5658623">
    <molecule id="O60258-1"/>
    <property type="pathway name" value="FGFRL1 modulation of FGFR1 signaling"/>
</dbReference>
<dbReference type="Reactome" id="R-HSA-5673001">
    <molecule id="O60258-1"/>
    <property type="pathway name" value="RAF/MAP kinase cascade"/>
</dbReference>
<dbReference type="Reactome" id="R-HSA-6811558">
    <molecule id="O60258-1"/>
    <property type="pathway name" value="PI5P, PP2A and IER3 Regulate PI3K/AKT Signaling"/>
</dbReference>
<dbReference type="SignaLink" id="O60258"/>
<dbReference type="SIGNOR" id="O60258"/>
<dbReference type="BioGRID-ORCS" id="8822">
    <property type="hits" value="13 hits in 1149 CRISPR screens"/>
</dbReference>
<dbReference type="GeneWiki" id="FGF17"/>
<dbReference type="GenomeRNAi" id="8822"/>
<dbReference type="Pharos" id="O60258">
    <property type="development level" value="Tbio"/>
</dbReference>
<dbReference type="PRO" id="PR:O60258"/>
<dbReference type="Proteomes" id="UP000005640">
    <property type="component" value="Chromosome 8"/>
</dbReference>
<dbReference type="RNAct" id="O60258">
    <property type="molecule type" value="protein"/>
</dbReference>
<dbReference type="Bgee" id="ENSG00000158815">
    <property type="expression patterns" value="Expressed in right hemisphere of cerebellum and 94 other cell types or tissues"/>
</dbReference>
<dbReference type="GO" id="GO:0005737">
    <property type="term" value="C:cytoplasm"/>
    <property type="evidence" value="ECO:0000318"/>
    <property type="project" value="GO_Central"/>
</dbReference>
<dbReference type="GO" id="GO:0005576">
    <property type="term" value="C:extracellular region"/>
    <property type="evidence" value="ECO:0000304"/>
    <property type="project" value="Reactome"/>
</dbReference>
<dbReference type="GO" id="GO:0005615">
    <property type="term" value="C:extracellular space"/>
    <property type="evidence" value="ECO:0000318"/>
    <property type="project" value="GO_Central"/>
</dbReference>
<dbReference type="GO" id="GO:0008083">
    <property type="term" value="F:growth factor activity"/>
    <property type="evidence" value="ECO:0000318"/>
    <property type="project" value="GO_Central"/>
</dbReference>
<dbReference type="GO" id="GO:0005105">
    <property type="term" value="F:type 1 fibroblast growth factor receptor binding"/>
    <property type="evidence" value="ECO:0000314"/>
    <property type="project" value="UniProtKB"/>
</dbReference>
<dbReference type="GO" id="GO:0005111">
    <property type="term" value="F:type 2 fibroblast growth factor receptor binding"/>
    <property type="evidence" value="ECO:0000314"/>
    <property type="project" value="UniProtKB"/>
</dbReference>
<dbReference type="GO" id="GO:0007267">
    <property type="term" value="P:cell-cell signaling"/>
    <property type="evidence" value="ECO:0000304"/>
    <property type="project" value="ProtInc"/>
</dbReference>
<dbReference type="GO" id="GO:0008543">
    <property type="term" value="P:fibroblast growth factor receptor signaling pathway"/>
    <property type="evidence" value="ECO:0000318"/>
    <property type="project" value="GO_Central"/>
</dbReference>
<dbReference type="GO" id="GO:0007399">
    <property type="term" value="P:nervous system development"/>
    <property type="evidence" value="ECO:0000304"/>
    <property type="project" value="ProtInc"/>
</dbReference>
<dbReference type="GO" id="GO:0022008">
    <property type="term" value="P:neurogenesis"/>
    <property type="evidence" value="ECO:0000318"/>
    <property type="project" value="GO_Central"/>
</dbReference>
<dbReference type="GO" id="GO:0008284">
    <property type="term" value="P:positive regulation of cell population proliferation"/>
    <property type="evidence" value="ECO:0000318"/>
    <property type="project" value="GO_Central"/>
</dbReference>
<dbReference type="GO" id="GO:0043410">
    <property type="term" value="P:positive regulation of MAPK cascade"/>
    <property type="evidence" value="ECO:0000318"/>
    <property type="project" value="GO_Central"/>
</dbReference>
<dbReference type="GO" id="GO:0030334">
    <property type="term" value="P:regulation of cell migration"/>
    <property type="evidence" value="ECO:0000318"/>
    <property type="project" value="GO_Central"/>
</dbReference>
<dbReference type="GO" id="GO:0007165">
    <property type="term" value="P:signal transduction"/>
    <property type="evidence" value="ECO:0000304"/>
    <property type="project" value="ProtInc"/>
</dbReference>
<dbReference type="CDD" id="cd23323">
    <property type="entry name" value="beta-trefoil_FGF17"/>
    <property type="match status" value="1"/>
</dbReference>
<dbReference type="FunFam" id="2.80.10.50:FF:000007">
    <property type="entry name" value="Fibroblast growth factor"/>
    <property type="match status" value="1"/>
</dbReference>
<dbReference type="Gene3D" id="2.80.10.50">
    <property type="match status" value="1"/>
</dbReference>
<dbReference type="InterPro" id="IPR002209">
    <property type="entry name" value="Fibroblast_GF_fam"/>
</dbReference>
<dbReference type="InterPro" id="IPR008996">
    <property type="entry name" value="IL1/FGF"/>
</dbReference>
<dbReference type="PANTHER" id="PTHR11486">
    <property type="entry name" value="FIBROBLAST GROWTH FACTOR"/>
    <property type="match status" value="1"/>
</dbReference>
<dbReference type="Pfam" id="PF00167">
    <property type="entry name" value="FGF"/>
    <property type="match status" value="1"/>
</dbReference>
<dbReference type="PRINTS" id="PR00262">
    <property type="entry name" value="IL1HBGF"/>
</dbReference>
<dbReference type="SMART" id="SM00442">
    <property type="entry name" value="FGF"/>
    <property type="match status" value="1"/>
</dbReference>
<dbReference type="SUPFAM" id="SSF50353">
    <property type="entry name" value="Cytokine"/>
    <property type="match status" value="1"/>
</dbReference>
<dbReference type="PROSITE" id="PS00247">
    <property type="entry name" value="HBGF_FGF"/>
    <property type="match status" value="1"/>
</dbReference>